<organism>
    <name type="scientific">Shigella flexneri</name>
    <dbReference type="NCBI Taxonomy" id="623"/>
    <lineage>
        <taxon>Bacteria</taxon>
        <taxon>Pseudomonadati</taxon>
        <taxon>Pseudomonadota</taxon>
        <taxon>Gammaproteobacteria</taxon>
        <taxon>Enterobacterales</taxon>
        <taxon>Enterobacteriaceae</taxon>
        <taxon>Shigella</taxon>
    </lineage>
</organism>
<feature type="chain" id="PRO_1000003384" description="3-deoxy-manno-octulosonate cytidylyltransferase">
    <location>
        <begin position="1"/>
        <end position="248"/>
    </location>
</feature>
<accession>Q83LN8</accession>
<accession>Q7C288</accession>
<comment type="function">
    <text evidence="1">Activates KDO (a required 8-carbon sugar) for incorporation into bacterial lipopolysaccharide in Gram-negative bacteria.</text>
</comment>
<comment type="catalytic activity">
    <reaction evidence="1">
        <text>3-deoxy-alpha-D-manno-oct-2-ulosonate + CTP = CMP-3-deoxy-beta-D-manno-octulosonate + diphosphate</text>
        <dbReference type="Rhea" id="RHEA:23448"/>
        <dbReference type="ChEBI" id="CHEBI:33019"/>
        <dbReference type="ChEBI" id="CHEBI:37563"/>
        <dbReference type="ChEBI" id="CHEBI:85986"/>
        <dbReference type="ChEBI" id="CHEBI:85987"/>
        <dbReference type="EC" id="2.7.7.38"/>
    </reaction>
</comment>
<comment type="pathway">
    <text evidence="1">Nucleotide-sugar biosynthesis; CMP-3-deoxy-D-manno-octulosonate biosynthesis; CMP-3-deoxy-D-manno-octulosonate from 3-deoxy-D-manno-octulosonate and CTP: step 1/1.</text>
</comment>
<comment type="pathway">
    <text evidence="1">Bacterial outer membrane biogenesis; lipopolysaccharide biosynthesis.</text>
</comment>
<comment type="subcellular location">
    <subcellularLocation>
        <location evidence="1">Cytoplasm</location>
    </subcellularLocation>
</comment>
<comment type="similarity">
    <text evidence="1">Belongs to the KdsB family.</text>
</comment>
<proteinExistence type="inferred from homology"/>
<keyword id="KW-0963">Cytoplasm</keyword>
<keyword id="KW-0448">Lipopolysaccharide biosynthesis</keyword>
<keyword id="KW-0548">Nucleotidyltransferase</keyword>
<keyword id="KW-1185">Reference proteome</keyword>
<keyword id="KW-0808">Transferase</keyword>
<reference key="1">
    <citation type="journal article" date="2002" name="Nucleic Acids Res.">
        <title>Genome sequence of Shigella flexneri 2a: insights into pathogenicity through comparison with genomes of Escherichia coli K12 and O157.</title>
        <authorList>
            <person name="Jin Q."/>
            <person name="Yuan Z."/>
            <person name="Xu J."/>
            <person name="Wang Y."/>
            <person name="Shen Y."/>
            <person name="Lu W."/>
            <person name="Wang J."/>
            <person name="Liu H."/>
            <person name="Yang J."/>
            <person name="Yang F."/>
            <person name="Zhang X."/>
            <person name="Zhang J."/>
            <person name="Yang G."/>
            <person name="Wu H."/>
            <person name="Qu D."/>
            <person name="Dong J."/>
            <person name="Sun L."/>
            <person name="Xue Y."/>
            <person name="Zhao A."/>
            <person name="Gao Y."/>
            <person name="Zhu J."/>
            <person name="Kan B."/>
            <person name="Ding K."/>
            <person name="Chen S."/>
            <person name="Cheng H."/>
            <person name="Yao Z."/>
            <person name="He B."/>
            <person name="Chen R."/>
            <person name="Ma D."/>
            <person name="Qiang B."/>
            <person name="Wen Y."/>
            <person name="Hou Y."/>
            <person name="Yu J."/>
        </authorList>
    </citation>
    <scope>NUCLEOTIDE SEQUENCE [LARGE SCALE GENOMIC DNA]</scope>
    <source>
        <strain>301 / Serotype 2a</strain>
    </source>
</reference>
<reference key="2">
    <citation type="journal article" date="2003" name="Infect. Immun.">
        <title>Complete genome sequence and comparative genomics of Shigella flexneri serotype 2a strain 2457T.</title>
        <authorList>
            <person name="Wei J."/>
            <person name="Goldberg M.B."/>
            <person name="Burland V."/>
            <person name="Venkatesan M.M."/>
            <person name="Deng W."/>
            <person name="Fournier G."/>
            <person name="Mayhew G.F."/>
            <person name="Plunkett G. III"/>
            <person name="Rose D.J."/>
            <person name="Darling A."/>
            <person name="Mau B."/>
            <person name="Perna N.T."/>
            <person name="Payne S.M."/>
            <person name="Runyen-Janecky L.J."/>
            <person name="Zhou S."/>
            <person name="Schwartz D.C."/>
            <person name="Blattner F.R."/>
        </authorList>
    </citation>
    <scope>NUCLEOTIDE SEQUENCE [LARGE SCALE GENOMIC DNA]</scope>
    <source>
        <strain>ATCC 700930 / 2457T / Serotype 2a</strain>
    </source>
</reference>
<protein>
    <recommendedName>
        <fullName evidence="1">3-deoxy-manno-octulosonate cytidylyltransferase</fullName>
        <ecNumber evidence="1">2.7.7.38</ecNumber>
    </recommendedName>
    <alternativeName>
        <fullName evidence="1">CMP-2-keto-3-deoxyoctulosonic acid synthase</fullName>
        <shortName evidence="1">CKS</shortName>
        <shortName evidence="1">CMP-KDO synthase</shortName>
    </alternativeName>
</protein>
<sequence length="248" mass="27574">MSFVVIIPARYASTRLPGKPLVDINGKPMIVHVLERARESGAERIIVATDHDDVARAVEAAGGEVCMTRADHQSGTERLAEVVEKCAFSDDTVIVNVQGDEPMIPATIIRQVADNLAQRQVGMATLAVPIHNAEEAFNPNAVKVVLDAEGYALYFSRATIPWDRDRFAEGLETVGDNFLRHLGIYGYRAGFIRRYVNWQASPLEHIEMLEQLRVLWYGEKIHVAVAQEVPGTGVDTPEDLERVRAEMR</sequence>
<evidence type="ECO:0000255" key="1">
    <source>
        <dbReference type="HAMAP-Rule" id="MF_00057"/>
    </source>
</evidence>
<dbReference type="EC" id="2.7.7.38" evidence="1"/>
<dbReference type="EMBL" id="AE005674">
    <property type="protein sequence ID" value="AAN42543.1"/>
    <property type="molecule type" value="Genomic_DNA"/>
</dbReference>
<dbReference type="EMBL" id="AE014073">
    <property type="protein sequence ID" value="AAP16429.1"/>
    <property type="molecule type" value="Genomic_DNA"/>
</dbReference>
<dbReference type="RefSeq" id="NP_706836.1">
    <property type="nucleotide sequence ID" value="NC_004337.2"/>
</dbReference>
<dbReference type="RefSeq" id="WP_000011599.1">
    <property type="nucleotide sequence ID" value="NZ_WPGW01000072.1"/>
</dbReference>
<dbReference type="SMR" id="Q83LN8"/>
<dbReference type="STRING" id="198214.SF0914"/>
<dbReference type="PaxDb" id="198214-SF0914"/>
<dbReference type="GeneID" id="1023904"/>
<dbReference type="KEGG" id="sfl:SF0914"/>
<dbReference type="KEGG" id="sfx:S0978"/>
<dbReference type="PATRIC" id="fig|198214.7.peg.1065"/>
<dbReference type="HOGENOM" id="CLU_065038_1_0_6"/>
<dbReference type="UniPathway" id="UPA00030"/>
<dbReference type="UniPathway" id="UPA00358">
    <property type="reaction ID" value="UER00476"/>
</dbReference>
<dbReference type="Proteomes" id="UP000001006">
    <property type="component" value="Chromosome"/>
</dbReference>
<dbReference type="Proteomes" id="UP000002673">
    <property type="component" value="Chromosome"/>
</dbReference>
<dbReference type="GO" id="GO:0005829">
    <property type="term" value="C:cytosol"/>
    <property type="evidence" value="ECO:0007669"/>
    <property type="project" value="TreeGrafter"/>
</dbReference>
<dbReference type="GO" id="GO:0008690">
    <property type="term" value="F:3-deoxy-manno-octulosonate cytidylyltransferase activity"/>
    <property type="evidence" value="ECO:0007669"/>
    <property type="project" value="UniProtKB-UniRule"/>
</dbReference>
<dbReference type="GO" id="GO:0033468">
    <property type="term" value="P:CMP-keto-3-deoxy-D-manno-octulosonic acid biosynthetic process"/>
    <property type="evidence" value="ECO:0007669"/>
    <property type="project" value="UniProtKB-UniRule"/>
</dbReference>
<dbReference type="GO" id="GO:0009103">
    <property type="term" value="P:lipopolysaccharide biosynthetic process"/>
    <property type="evidence" value="ECO:0007669"/>
    <property type="project" value="UniProtKB-UniRule"/>
</dbReference>
<dbReference type="CDD" id="cd02517">
    <property type="entry name" value="CMP-KDO-Synthetase"/>
    <property type="match status" value="1"/>
</dbReference>
<dbReference type="FunFam" id="3.90.550.10:FF:000011">
    <property type="entry name" value="3-deoxy-manno-octulosonate cytidylyltransferase"/>
    <property type="match status" value="1"/>
</dbReference>
<dbReference type="Gene3D" id="3.90.550.10">
    <property type="entry name" value="Spore Coat Polysaccharide Biosynthesis Protein SpsA, Chain A"/>
    <property type="match status" value="1"/>
</dbReference>
<dbReference type="HAMAP" id="MF_00057">
    <property type="entry name" value="KdsB"/>
    <property type="match status" value="1"/>
</dbReference>
<dbReference type="InterPro" id="IPR003329">
    <property type="entry name" value="Cytidylyl_trans"/>
</dbReference>
<dbReference type="InterPro" id="IPR004528">
    <property type="entry name" value="KdsB"/>
</dbReference>
<dbReference type="InterPro" id="IPR029044">
    <property type="entry name" value="Nucleotide-diphossugar_trans"/>
</dbReference>
<dbReference type="NCBIfam" id="TIGR00466">
    <property type="entry name" value="kdsB"/>
    <property type="match status" value="1"/>
</dbReference>
<dbReference type="NCBIfam" id="NF003950">
    <property type="entry name" value="PRK05450.1-3"/>
    <property type="match status" value="1"/>
</dbReference>
<dbReference type="NCBIfam" id="NF003952">
    <property type="entry name" value="PRK05450.1-5"/>
    <property type="match status" value="1"/>
</dbReference>
<dbReference type="NCBIfam" id="NF009905">
    <property type="entry name" value="PRK13368.1"/>
    <property type="match status" value="1"/>
</dbReference>
<dbReference type="PANTHER" id="PTHR42866">
    <property type="entry name" value="3-DEOXY-MANNO-OCTULOSONATE CYTIDYLYLTRANSFERASE"/>
    <property type="match status" value="1"/>
</dbReference>
<dbReference type="PANTHER" id="PTHR42866:SF2">
    <property type="entry name" value="3-DEOXY-MANNO-OCTULOSONATE CYTIDYLYLTRANSFERASE, MITOCHONDRIAL"/>
    <property type="match status" value="1"/>
</dbReference>
<dbReference type="Pfam" id="PF02348">
    <property type="entry name" value="CTP_transf_3"/>
    <property type="match status" value="1"/>
</dbReference>
<dbReference type="SUPFAM" id="SSF53448">
    <property type="entry name" value="Nucleotide-diphospho-sugar transferases"/>
    <property type="match status" value="1"/>
</dbReference>
<gene>
    <name evidence="1" type="primary">kdsB</name>
    <name type="ordered locus">SF0914</name>
    <name type="ordered locus">S0978</name>
</gene>
<name>KDSB_SHIFL</name>